<dbReference type="EMBL" id="CP000896">
    <property type="protein sequence ID" value="ABX80763.1"/>
    <property type="molecule type" value="Genomic_DNA"/>
</dbReference>
<dbReference type="RefSeq" id="WP_012242094.1">
    <property type="nucleotide sequence ID" value="NC_010163.1"/>
</dbReference>
<dbReference type="SMR" id="A9NEI3"/>
<dbReference type="STRING" id="441768.ACL_0137"/>
<dbReference type="GeneID" id="41338335"/>
<dbReference type="KEGG" id="acl:ACL_0137"/>
<dbReference type="eggNOG" id="COG0102">
    <property type="taxonomic scope" value="Bacteria"/>
</dbReference>
<dbReference type="HOGENOM" id="CLU_082184_2_2_14"/>
<dbReference type="OrthoDB" id="9801330at2"/>
<dbReference type="Proteomes" id="UP000008558">
    <property type="component" value="Chromosome"/>
</dbReference>
<dbReference type="GO" id="GO:0022625">
    <property type="term" value="C:cytosolic large ribosomal subunit"/>
    <property type="evidence" value="ECO:0007669"/>
    <property type="project" value="TreeGrafter"/>
</dbReference>
<dbReference type="GO" id="GO:0003729">
    <property type="term" value="F:mRNA binding"/>
    <property type="evidence" value="ECO:0007669"/>
    <property type="project" value="TreeGrafter"/>
</dbReference>
<dbReference type="GO" id="GO:0003735">
    <property type="term" value="F:structural constituent of ribosome"/>
    <property type="evidence" value="ECO:0007669"/>
    <property type="project" value="InterPro"/>
</dbReference>
<dbReference type="GO" id="GO:0017148">
    <property type="term" value="P:negative regulation of translation"/>
    <property type="evidence" value="ECO:0007669"/>
    <property type="project" value="TreeGrafter"/>
</dbReference>
<dbReference type="GO" id="GO:0006412">
    <property type="term" value="P:translation"/>
    <property type="evidence" value="ECO:0007669"/>
    <property type="project" value="UniProtKB-UniRule"/>
</dbReference>
<dbReference type="CDD" id="cd00392">
    <property type="entry name" value="Ribosomal_L13"/>
    <property type="match status" value="1"/>
</dbReference>
<dbReference type="FunFam" id="3.90.1180.10:FF:000001">
    <property type="entry name" value="50S ribosomal protein L13"/>
    <property type="match status" value="1"/>
</dbReference>
<dbReference type="Gene3D" id="3.90.1180.10">
    <property type="entry name" value="Ribosomal protein L13"/>
    <property type="match status" value="1"/>
</dbReference>
<dbReference type="HAMAP" id="MF_01366">
    <property type="entry name" value="Ribosomal_uL13"/>
    <property type="match status" value="1"/>
</dbReference>
<dbReference type="InterPro" id="IPR005822">
    <property type="entry name" value="Ribosomal_uL13"/>
</dbReference>
<dbReference type="InterPro" id="IPR005823">
    <property type="entry name" value="Ribosomal_uL13_bac-type"/>
</dbReference>
<dbReference type="InterPro" id="IPR023563">
    <property type="entry name" value="Ribosomal_uL13_CS"/>
</dbReference>
<dbReference type="InterPro" id="IPR036899">
    <property type="entry name" value="Ribosomal_uL13_sf"/>
</dbReference>
<dbReference type="NCBIfam" id="TIGR01066">
    <property type="entry name" value="rplM_bact"/>
    <property type="match status" value="1"/>
</dbReference>
<dbReference type="PANTHER" id="PTHR11545:SF2">
    <property type="entry name" value="LARGE RIBOSOMAL SUBUNIT PROTEIN UL13M"/>
    <property type="match status" value="1"/>
</dbReference>
<dbReference type="PANTHER" id="PTHR11545">
    <property type="entry name" value="RIBOSOMAL PROTEIN L13"/>
    <property type="match status" value="1"/>
</dbReference>
<dbReference type="Pfam" id="PF00572">
    <property type="entry name" value="Ribosomal_L13"/>
    <property type="match status" value="1"/>
</dbReference>
<dbReference type="PIRSF" id="PIRSF002181">
    <property type="entry name" value="Ribosomal_L13"/>
    <property type="match status" value="1"/>
</dbReference>
<dbReference type="SUPFAM" id="SSF52161">
    <property type="entry name" value="Ribosomal protein L13"/>
    <property type="match status" value="1"/>
</dbReference>
<dbReference type="PROSITE" id="PS00783">
    <property type="entry name" value="RIBOSOMAL_L13"/>
    <property type="match status" value="1"/>
</dbReference>
<sequence>MKTFMANESTIQRKWYVVDAEGKTLGRLATVVASVLKGKHKPTYTPHVDSGDYVIVINAEKIKLTGNKWNDKIYYKHSGYESGLTETPAKELVVKKPTALVEKAVKGMIPHTSLGRDMFRKLFVYAGPEHKHQAQQPESLEV</sequence>
<organism>
    <name type="scientific">Acholeplasma laidlawii (strain PG-8A)</name>
    <dbReference type="NCBI Taxonomy" id="441768"/>
    <lineage>
        <taxon>Bacteria</taxon>
        <taxon>Bacillati</taxon>
        <taxon>Mycoplasmatota</taxon>
        <taxon>Mollicutes</taxon>
        <taxon>Acholeplasmatales</taxon>
        <taxon>Acholeplasmataceae</taxon>
        <taxon>Acholeplasma</taxon>
    </lineage>
</organism>
<reference key="1">
    <citation type="journal article" date="2011" name="J. Bacteriol.">
        <title>Complete genome and proteome of Acholeplasma laidlawii.</title>
        <authorList>
            <person name="Lazarev V.N."/>
            <person name="Levitskii S.A."/>
            <person name="Basovskii Y.I."/>
            <person name="Chukin M.M."/>
            <person name="Akopian T.A."/>
            <person name="Vereshchagin V.V."/>
            <person name="Kostrjukova E.S."/>
            <person name="Kovaleva G.Y."/>
            <person name="Kazanov M.D."/>
            <person name="Malko D.B."/>
            <person name="Vitreschak A.G."/>
            <person name="Sernova N.V."/>
            <person name="Gelfand M.S."/>
            <person name="Demina I.A."/>
            <person name="Serebryakova M.V."/>
            <person name="Galyamina M.A."/>
            <person name="Vtyurin N.N."/>
            <person name="Rogov S.I."/>
            <person name="Alexeev D.G."/>
            <person name="Ladygina V.G."/>
            <person name="Govorun V.M."/>
        </authorList>
    </citation>
    <scope>NUCLEOTIDE SEQUENCE [LARGE SCALE GENOMIC DNA]</scope>
    <source>
        <strain>PG-8A</strain>
    </source>
</reference>
<proteinExistence type="inferred from homology"/>
<accession>A9NEI3</accession>
<gene>
    <name evidence="1" type="primary">rplM</name>
    <name type="ordered locus">ACL_0137</name>
</gene>
<protein>
    <recommendedName>
        <fullName evidence="1">Large ribosomal subunit protein uL13</fullName>
    </recommendedName>
    <alternativeName>
        <fullName evidence="2">50S ribosomal protein L13</fullName>
    </alternativeName>
</protein>
<name>RL13_ACHLI</name>
<keyword id="KW-1185">Reference proteome</keyword>
<keyword id="KW-0687">Ribonucleoprotein</keyword>
<keyword id="KW-0689">Ribosomal protein</keyword>
<feature type="chain" id="PRO_1000087074" description="Large ribosomal subunit protein uL13">
    <location>
        <begin position="1"/>
        <end position="142"/>
    </location>
</feature>
<evidence type="ECO:0000255" key="1">
    <source>
        <dbReference type="HAMAP-Rule" id="MF_01366"/>
    </source>
</evidence>
<evidence type="ECO:0000305" key="2"/>
<comment type="function">
    <text evidence="1">This protein is one of the early assembly proteins of the 50S ribosomal subunit, although it is not seen to bind rRNA by itself. It is important during the early stages of 50S assembly.</text>
</comment>
<comment type="subunit">
    <text evidence="1">Part of the 50S ribosomal subunit.</text>
</comment>
<comment type="similarity">
    <text evidence="1">Belongs to the universal ribosomal protein uL13 family.</text>
</comment>